<evidence type="ECO:0000269" key="1">
    <source ref="4"/>
</evidence>
<evidence type="ECO:0000303" key="2">
    <source ref="2"/>
</evidence>
<evidence type="ECO:0000305" key="3"/>
<evidence type="ECO:0007744" key="4">
    <source>
    </source>
</evidence>
<organism>
    <name type="scientific">Homo sapiens</name>
    <name type="common">Human</name>
    <dbReference type="NCBI Taxonomy" id="9606"/>
    <lineage>
        <taxon>Eukaryota</taxon>
        <taxon>Metazoa</taxon>
        <taxon>Chordata</taxon>
        <taxon>Craniata</taxon>
        <taxon>Vertebrata</taxon>
        <taxon>Euteleostomi</taxon>
        <taxon>Mammalia</taxon>
        <taxon>Eutheria</taxon>
        <taxon>Euarchontoglires</taxon>
        <taxon>Primates</taxon>
        <taxon>Haplorrhini</taxon>
        <taxon>Catarrhini</taxon>
        <taxon>Hominidae</taxon>
        <taxon>Homo</taxon>
    </lineage>
</organism>
<proteinExistence type="evidence at protein level"/>
<dbReference type="EMBL" id="L35546">
    <property type="protein sequence ID" value="AAA65028.1"/>
    <property type="molecule type" value="mRNA"/>
</dbReference>
<dbReference type="EMBL" id="AB809606">
    <property type="protein sequence ID" value="BAN05309.1"/>
    <property type="molecule type" value="mRNA"/>
</dbReference>
<dbReference type="EMBL" id="CR541833">
    <property type="protein sequence ID" value="CAG46632.1"/>
    <property type="molecule type" value="mRNA"/>
</dbReference>
<dbReference type="EMBL" id="AY773965">
    <property type="protein sequence ID" value="AAV28733.1"/>
    <property type="molecule type" value="Genomic_DNA"/>
</dbReference>
<dbReference type="EMBL" id="AK290449">
    <property type="protein sequence ID" value="BAF83138.1"/>
    <property type="molecule type" value="mRNA"/>
</dbReference>
<dbReference type="EMBL" id="AL049796">
    <property type="status" value="NOT_ANNOTATED_CDS"/>
    <property type="molecule type" value="Genomic_DNA"/>
</dbReference>
<dbReference type="EMBL" id="AL117351">
    <property type="status" value="NOT_ANNOTATED_CDS"/>
    <property type="molecule type" value="Genomic_DNA"/>
</dbReference>
<dbReference type="EMBL" id="CH471097">
    <property type="protein sequence ID" value="EAW73060.1"/>
    <property type="molecule type" value="Genomic_DNA"/>
</dbReference>
<dbReference type="EMBL" id="CH471097">
    <property type="protein sequence ID" value="EAW73061.1"/>
    <property type="molecule type" value="Genomic_DNA"/>
</dbReference>
<dbReference type="EMBL" id="BC041809">
    <property type="protein sequence ID" value="AAH41809.1"/>
    <property type="molecule type" value="mRNA"/>
</dbReference>
<dbReference type="CCDS" id="CCDS746.1">
    <molecule id="P48507-1"/>
</dbReference>
<dbReference type="CCDS" id="CCDS81352.1">
    <molecule id="P48507-2"/>
</dbReference>
<dbReference type="PIR" id="JC2474">
    <property type="entry name" value="JC2474"/>
</dbReference>
<dbReference type="RefSeq" id="NP_001295182.1">
    <molecule id="P48507-2"/>
    <property type="nucleotide sequence ID" value="NM_001308253.2"/>
</dbReference>
<dbReference type="RefSeq" id="NP_002052.1">
    <molecule id="P48507-1"/>
    <property type="nucleotide sequence ID" value="NM_002061.4"/>
</dbReference>
<dbReference type="SMR" id="P48507"/>
<dbReference type="BioGRID" id="108992">
    <property type="interactions" value="61"/>
</dbReference>
<dbReference type="ComplexPortal" id="CPX-2865">
    <property type="entry name" value="Glutamate-cysteine ligase complex"/>
</dbReference>
<dbReference type="CORUM" id="P48507"/>
<dbReference type="FunCoup" id="P48507">
    <property type="interactions" value="1439"/>
</dbReference>
<dbReference type="IntAct" id="P48507">
    <property type="interactions" value="26"/>
</dbReference>
<dbReference type="MINT" id="P48507"/>
<dbReference type="STRING" id="9606.ENSP00000359258"/>
<dbReference type="ChEMBL" id="CHEMBL4295765"/>
<dbReference type="DrugBank" id="DB00151">
    <property type="generic name" value="Cysteine"/>
</dbReference>
<dbReference type="DrugBank" id="DB00142">
    <property type="generic name" value="Glutamic acid"/>
</dbReference>
<dbReference type="GlyGen" id="P48507">
    <property type="glycosylation" value="1 site, 1 O-linked glycan (1 site)"/>
</dbReference>
<dbReference type="iPTMnet" id="P48507"/>
<dbReference type="PhosphoSitePlus" id="P48507"/>
<dbReference type="BioMuta" id="GCLM"/>
<dbReference type="DMDM" id="1346188"/>
<dbReference type="OGP" id="P48507"/>
<dbReference type="jPOST" id="P48507"/>
<dbReference type="MassIVE" id="P48507"/>
<dbReference type="PaxDb" id="9606-ENSP00000359258"/>
<dbReference type="PeptideAtlas" id="P48507"/>
<dbReference type="ProteomicsDB" id="55897">
    <molecule id="P48507-1"/>
</dbReference>
<dbReference type="Pumba" id="P48507"/>
<dbReference type="Antibodypedia" id="4034">
    <property type="antibodies" value="465 antibodies from 37 providers"/>
</dbReference>
<dbReference type="CPTC" id="P48507">
    <property type="antibodies" value="3 antibodies"/>
</dbReference>
<dbReference type="DNASU" id="2730"/>
<dbReference type="Ensembl" id="ENST00000370238.8">
    <molecule id="P48507-1"/>
    <property type="protein sequence ID" value="ENSP00000359258.3"/>
    <property type="gene ID" value="ENSG00000023909.10"/>
</dbReference>
<dbReference type="Ensembl" id="ENST00000615724.1">
    <molecule id="P48507-2"/>
    <property type="protein sequence ID" value="ENSP00000484507.1"/>
    <property type="gene ID" value="ENSG00000023909.10"/>
</dbReference>
<dbReference type="GeneID" id="2730"/>
<dbReference type="KEGG" id="hsa:2730"/>
<dbReference type="MANE-Select" id="ENST00000370238.8">
    <property type="protein sequence ID" value="ENSP00000359258.3"/>
    <property type="RefSeq nucleotide sequence ID" value="NM_002061.4"/>
    <property type="RefSeq protein sequence ID" value="NP_002052.1"/>
</dbReference>
<dbReference type="UCSC" id="uc001dqg.2">
    <molecule id="P48507-1"/>
    <property type="organism name" value="human"/>
</dbReference>
<dbReference type="AGR" id="HGNC:4312"/>
<dbReference type="CTD" id="2730"/>
<dbReference type="DisGeNET" id="2730"/>
<dbReference type="GeneCards" id="GCLM"/>
<dbReference type="HGNC" id="HGNC:4312">
    <property type="gene designation" value="GCLM"/>
</dbReference>
<dbReference type="HPA" id="ENSG00000023909">
    <property type="expression patterns" value="Tissue enhanced (liver)"/>
</dbReference>
<dbReference type="MalaCards" id="GCLM"/>
<dbReference type="MIM" id="601176">
    <property type="type" value="gene+phenotype"/>
</dbReference>
<dbReference type="neXtProt" id="NX_P48507"/>
<dbReference type="OpenTargets" id="ENSG00000023909"/>
<dbReference type="PharmGKB" id="PA28613"/>
<dbReference type="VEuPathDB" id="HostDB:ENSG00000023909"/>
<dbReference type="eggNOG" id="KOG3023">
    <property type="taxonomic scope" value="Eukaryota"/>
</dbReference>
<dbReference type="GeneTree" id="ENSGT00510000047658"/>
<dbReference type="HOGENOM" id="CLU_055657_1_0_1"/>
<dbReference type="InParanoid" id="P48507"/>
<dbReference type="OMA" id="AHEWIPL"/>
<dbReference type="OrthoDB" id="5596051at2759"/>
<dbReference type="PAN-GO" id="P48507">
    <property type="GO annotations" value="4 GO annotations based on evolutionary models"/>
</dbReference>
<dbReference type="PhylomeDB" id="P48507"/>
<dbReference type="TreeFam" id="TF105986"/>
<dbReference type="BioCyc" id="MetaCyc:ENSG00000023909-MONOMER"/>
<dbReference type="BRENDA" id="6.3.2.2">
    <property type="organism ID" value="2681"/>
</dbReference>
<dbReference type="PathwayCommons" id="P48507"/>
<dbReference type="Reactome" id="R-HSA-174403">
    <property type="pathway name" value="Glutathione synthesis and recycling"/>
</dbReference>
<dbReference type="Reactome" id="R-HSA-5578999">
    <property type="pathway name" value="Defective GCLC causes HAGGSD"/>
</dbReference>
<dbReference type="Reactome" id="R-HSA-9818027">
    <property type="pathway name" value="NFE2L2 regulating anti-oxidant/detoxification enzymes"/>
</dbReference>
<dbReference type="SignaLink" id="P48507"/>
<dbReference type="UniPathway" id="UPA00142">
    <property type="reaction ID" value="UER00209"/>
</dbReference>
<dbReference type="BioGRID-ORCS" id="2730">
    <property type="hits" value="13 hits in 1160 CRISPR screens"/>
</dbReference>
<dbReference type="ChiTaRS" id="GCLM">
    <property type="organism name" value="human"/>
</dbReference>
<dbReference type="GeneWiki" id="GCLM"/>
<dbReference type="GenomeRNAi" id="2730"/>
<dbReference type="Pharos" id="P48507">
    <property type="development level" value="Tbio"/>
</dbReference>
<dbReference type="PRO" id="PR:P48507"/>
<dbReference type="Proteomes" id="UP000005640">
    <property type="component" value="Chromosome 1"/>
</dbReference>
<dbReference type="RNAct" id="P48507">
    <property type="molecule type" value="protein"/>
</dbReference>
<dbReference type="Bgee" id="ENSG00000023909">
    <property type="expression patterns" value="Expressed in bronchial epithelial cell and 204 other cell types or tissues"/>
</dbReference>
<dbReference type="GO" id="GO:0005829">
    <property type="term" value="C:cytosol"/>
    <property type="evidence" value="ECO:0000304"/>
    <property type="project" value="Reactome"/>
</dbReference>
<dbReference type="GO" id="GO:0017109">
    <property type="term" value="C:glutamate-cysteine ligase complex"/>
    <property type="evidence" value="ECO:0000314"/>
    <property type="project" value="UniProtKB"/>
</dbReference>
<dbReference type="GO" id="GO:0004357">
    <property type="term" value="F:glutamate-cysteine ligase activity"/>
    <property type="evidence" value="ECO:0007669"/>
    <property type="project" value="Ensembl"/>
</dbReference>
<dbReference type="GO" id="GO:0035226">
    <property type="term" value="F:glutamate-cysteine ligase catalytic subunit binding"/>
    <property type="evidence" value="ECO:0000353"/>
    <property type="project" value="UniProtKB"/>
</dbReference>
<dbReference type="GO" id="GO:1990609">
    <property type="term" value="F:glutamate-cysteine ligase regulator activity"/>
    <property type="evidence" value="ECO:0000318"/>
    <property type="project" value="GO_Central"/>
</dbReference>
<dbReference type="GO" id="GO:0044877">
    <property type="term" value="F:protein-containing complex binding"/>
    <property type="evidence" value="ECO:0007669"/>
    <property type="project" value="Ensembl"/>
</dbReference>
<dbReference type="GO" id="GO:0008637">
    <property type="term" value="P:apoptotic mitochondrial changes"/>
    <property type="evidence" value="ECO:0007669"/>
    <property type="project" value="Ensembl"/>
</dbReference>
<dbReference type="GO" id="GO:0097746">
    <property type="term" value="P:blood vessel diameter maintenance"/>
    <property type="evidence" value="ECO:0000315"/>
    <property type="project" value="UniProtKB"/>
</dbReference>
<dbReference type="GO" id="GO:0044344">
    <property type="term" value="P:cellular response to fibroblast growth factor stimulus"/>
    <property type="evidence" value="ECO:0007669"/>
    <property type="project" value="Ensembl"/>
</dbReference>
<dbReference type="GO" id="GO:0071372">
    <property type="term" value="P:cellular response to follicle-stimulating hormone stimulus"/>
    <property type="evidence" value="ECO:0007669"/>
    <property type="project" value="Ensembl"/>
</dbReference>
<dbReference type="GO" id="GO:0071333">
    <property type="term" value="P:cellular response to glucose stimulus"/>
    <property type="evidence" value="ECO:0007669"/>
    <property type="project" value="Ensembl"/>
</dbReference>
<dbReference type="GO" id="GO:0035729">
    <property type="term" value="P:cellular response to hepatocyte growth factor stimulus"/>
    <property type="evidence" value="ECO:0007669"/>
    <property type="project" value="Ensembl"/>
</dbReference>
<dbReference type="GO" id="GO:1990830">
    <property type="term" value="P:cellular response to leukemia inhibitory factor"/>
    <property type="evidence" value="ECO:0007669"/>
    <property type="project" value="Ensembl"/>
</dbReference>
<dbReference type="GO" id="GO:0097069">
    <property type="term" value="P:cellular response to thyroxine stimulus"/>
    <property type="evidence" value="ECO:0007669"/>
    <property type="project" value="Ensembl"/>
</dbReference>
<dbReference type="GO" id="GO:0006534">
    <property type="term" value="P:cysteine metabolic process"/>
    <property type="evidence" value="ECO:0007669"/>
    <property type="project" value="Ensembl"/>
</dbReference>
<dbReference type="GO" id="GO:0006536">
    <property type="term" value="P:glutamate metabolic process"/>
    <property type="evidence" value="ECO:0000314"/>
    <property type="project" value="UniProtKB"/>
</dbReference>
<dbReference type="GO" id="GO:0006750">
    <property type="term" value="P:glutathione biosynthetic process"/>
    <property type="evidence" value="ECO:0000314"/>
    <property type="project" value="UniProtKB"/>
</dbReference>
<dbReference type="GO" id="GO:0035733">
    <property type="term" value="P:hepatic stellate cell activation"/>
    <property type="evidence" value="ECO:0007669"/>
    <property type="project" value="Ensembl"/>
</dbReference>
<dbReference type="GO" id="GO:2001237">
    <property type="term" value="P:negative regulation of extrinsic apoptotic signaling pathway"/>
    <property type="evidence" value="ECO:0007669"/>
    <property type="project" value="Ensembl"/>
</dbReference>
<dbReference type="GO" id="GO:0043524">
    <property type="term" value="P:negative regulation of neuron apoptotic process"/>
    <property type="evidence" value="ECO:0007669"/>
    <property type="project" value="Ensembl"/>
</dbReference>
<dbReference type="GO" id="GO:0051900">
    <property type="term" value="P:regulation of mitochondrial depolarization"/>
    <property type="evidence" value="ECO:0007669"/>
    <property type="project" value="Ensembl"/>
</dbReference>
<dbReference type="GO" id="GO:0014823">
    <property type="term" value="P:response to activity"/>
    <property type="evidence" value="ECO:0007669"/>
    <property type="project" value="Ensembl"/>
</dbReference>
<dbReference type="GO" id="GO:0044752">
    <property type="term" value="P:response to human chorionic gonadotropin"/>
    <property type="evidence" value="ECO:0007669"/>
    <property type="project" value="Ensembl"/>
</dbReference>
<dbReference type="GO" id="GO:0051409">
    <property type="term" value="P:response to nitrosative stress"/>
    <property type="evidence" value="ECO:0007669"/>
    <property type="project" value="Ensembl"/>
</dbReference>
<dbReference type="GO" id="GO:0007584">
    <property type="term" value="P:response to nutrient"/>
    <property type="evidence" value="ECO:0007669"/>
    <property type="project" value="Ensembl"/>
</dbReference>
<dbReference type="GO" id="GO:0006979">
    <property type="term" value="P:response to oxidative stress"/>
    <property type="evidence" value="ECO:0000314"/>
    <property type="project" value="UniProtKB"/>
</dbReference>
<dbReference type="GO" id="GO:0009410">
    <property type="term" value="P:response to xenobiotic stimulus"/>
    <property type="evidence" value="ECO:0000314"/>
    <property type="project" value="UniProtKB"/>
</dbReference>
<dbReference type="FunFam" id="3.20.20.100:FF:000012">
    <property type="entry name" value="Glutamate--cysteine ligase regulatory subunit"/>
    <property type="match status" value="1"/>
</dbReference>
<dbReference type="Gene3D" id="3.20.20.100">
    <property type="entry name" value="NADP-dependent oxidoreductase domain"/>
    <property type="match status" value="1"/>
</dbReference>
<dbReference type="InterPro" id="IPR032963">
    <property type="entry name" value="Gclm"/>
</dbReference>
<dbReference type="InterPro" id="IPR023210">
    <property type="entry name" value="NADP_OxRdtase_dom"/>
</dbReference>
<dbReference type="InterPro" id="IPR036812">
    <property type="entry name" value="NADP_OxRdtase_dom_sf"/>
</dbReference>
<dbReference type="PANTHER" id="PTHR13295">
    <property type="entry name" value="GLUTAMATE CYSTEINE LIGASE REGULATORY SUBUNIT"/>
    <property type="match status" value="1"/>
</dbReference>
<dbReference type="PANTHER" id="PTHR13295:SF4">
    <property type="entry name" value="GLUTAMATE--CYSTEINE LIGASE REGULATORY SUBUNIT"/>
    <property type="match status" value="1"/>
</dbReference>
<dbReference type="Pfam" id="PF00248">
    <property type="entry name" value="Aldo_ket_red"/>
    <property type="match status" value="1"/>
</dbReference>
<dbReference type="SUPFAM" id="SSF51430">
    <property type="entry name" value="NAD(P)-linked oxidoreductase"/>
    <property type="match status" value="1"/>
</dbReference>
<name>GSH0_HUMAN</name>
<accession>P48507</accession>
<accession>A8K334</accession>
<accession>D3DT45</accession>
<accession>M5A959</accession>
<accession>Q6FHC1</accession>
<accession>Q9NPX9</accession>
<accession>Q9NU74</accession>
<gene>
    <name type="primary">GCLM</name>
    <name type="synonym">GLCLR</name>
</gene>
<sequence length="274" mass="30727">MGTDSRAAKALLARARTLHLQTGNLLNWGRLRKKCPSTHSEELHDCIQKTLNEWSSQINPDLVREFPDVLECTVSHAVEKINPDEREEMKVSAKLFIVESNSSSSTRSAVDMACSVLGVAQLDSVIIASPPIEDGVNLSLEHLQPYWEELENLVQSKKIVAIGTSDLDKTQLEQLYQWAQVKPNSNQVNLASCCVMPPDLTAFAKQFDIQLLTHNDPKELLSEASFQEALQESIPDIQAHEWVPLWLLRYSVIVKSRGIIKSKGYILQAKRRGS</sequence>
<reference key="1">
    <citation type="journal article" date="1995" name="Biochem. Biophys. Res. Commun.">
        <title>Cloning and sequencing of the cDNA for the light subunit of human liver gamma-glutamylcysteine synthetase and relative mRNA levels for heavy and light subunits in human normal tissues.</title>
        <authorList>
            <person name="Gipp J.J."/>
            <person name="Bailey H.H."/>
            <person name="Mulcahy R.T."/>
        </authorList>
    </citation>
    <scope>NUCLEOTIDE SEQUENCE [MRNA] (ISOFORM 1)</scope>
    <source>
        <tissue>Liver</tissue>
    </source>
</reference>
<reference key="2">
    <citation type="submission" date="2013-03" db="EMBL/GenBank/DDBJ databases">
        <title>Homo sapiens GCLM mRNA for glutamate-cysteine ligase, modifier subunit delta2 alternative splicing variant, complete cds.</title>
        <authorList>
            <person name="Sawada Y."/>
            <person name="Sudo M."/>
            <person name="Fujii A."/>
            <person name="Mizuochi A."/>
            <person name="Hisatomi H."/>
        </authorList>
    </citation>
    <scope>NUCLEOTIDE SEQUENCE [MRNA] (ISOFORM 2)</scope>
    <scope>ALTERNATIVE SPLICING</scope>
</reference>
<reference key="3">
    <citation type="submission" date="2004-06" db="EMBL/GenBank/DDBJ databases">
        <title>Cloning of human full open reading frames in Gateway(TM) system entry vector (pDONR201).</title>
        <authorList>
            <person name="Ebert L."/>
            <person name="Schick M."/>
            <person name="Neubert P."/>
            <person name="Schatten R."/>
            <person name="Henze S."/>
            <person name="Korn B."/>
        </authorList>
    </citation>
    <scope>NUCLEOTIDE SEQUENCE [LARGE SCALE MRNA] (ISOFORM 1)</scope>
</reference>
<reference key="4">
    <citation type="submission" date="2004-10" db="EMBL/GenBank/DDBJ databases">
        <authorList>
            <consortium name="NIEHS SNPs program"/>
        </authorList>
    </citation>
    <scope>NUCLEOTIDE SEQUENCE [GENOMIC DNA]</scope>
    <scope>VARIANT MET-209</scope>
</reference>
<reference key="5">
    <citation type="journal article" date="2004" name="Nat. Genet.">
        <title>Complete sequencing and characterization of 21,243 full-length human cDNAs.</title>
        <authorList>
            <person name="Ota T."/>
            <person name="Suzuki Y."/>
            <person name="Nishikawa T."/>
            <person name="Otsuki T."/>
            <person name="Sugiyama T."/>
            <person name="Irie R."/>
            <person name="Wakamatsu A."/>
            <person name="Hayashi K."/>
            <person name="Sato H."/>
            <person name="Nagai K."/>
            <person name="Kimura K."/>
            <person name="Makita H."/>
            <person name="Sekine M."/>
            <person name="Obayashi M."/>
            <person name="Nishi T."/>
            <person name="Shibahara T."/>
            <person name="Tanaka T."/>
            <person name="Ishii S."/>
            <person name="Yamamoto J."/>
            <person name="Saito K."/>
            <person name="Kawai Y."/>
            <person name="Isono Y."/>
            <person name="Nakamura Y."/>
            <person name="Nagahari K."/>
            <person name="Murakami K."/>
            <person name="Yasuda T."/>
            <person name="Iwayanagi T."/>
            <person name="Wagatsuma M."/>
            <person name="Shiratori A."/>
            <person name="Sudo H."/>
            <person name="Hosoiri T."/>
            <person name="Kaku Y."/>
            <person name="Kodaira H."/>
            <person name="Kondo H."/>
            <person name="Sugawara M."/>
            <person name="Takahashi M."/>
            <person name="Kanda K."/>
            <person name="Yokoi T."/>
            <person name="Furuya T."/>
            <person name="Kikkawa E."/>
            <person name="Omura Y."/>
            <person name="Abe K."/>
            <person name="Kamihara K."/>
            <person name="Katsuta N."/>
            <person name="Sato K."/>
            <person name="Tanikawa M."/>
            <person name="Yamazaki M."/>
            <person name="Ninomiya K."/>
            <person name="Ishibashi T."/>
            <person name="Yamashita H."/>
            <person name="Murakawa K."/>
            <person name="Fujimori K."/>
            <person name="Tanai H."/>
            <person name="Kimata M."/>
            <person name="Watanabe M."/>
            <person name="Hiraoka S."/>
            <person name="Chiba Y."/>
            <person name="Ishida S."/>
            <person name="Ono Y."/>
            <person name="Takiguchi S."/>
            <person name="Watanabe S."/>
            <person name="Yosida M."/>
            <person name="Hotuta T."/>
            <person name="Kusano J."/>
            <person name="Kanehori K."/>
            <person name="Takahashi-Fujii A."/>
            <person name="Hara H."/>
            <person name="Tanase T.-O."/>
            <person name="Nomura Y."/>
            <person name="Togiya S."/>
            <person name="Komai F."/>
            <person name="Hara R."/>
            <person name="Takeuchi K."/>
            <person name="Arita M."/>
            <person name="Imose N."/>
            <person name="Musashino K."/>
            <person name="Yuuki H."/>
            <person name="Oshima A."/>
            <person name="Sasaki N."/>
            <person name="Aotsuka S."/>
            <person name="Yoshikawa Y."/>
            <person name="Matsunawa H."/>
            <person name="Ichihara T."/>
            <person name="Shiohata N."/>
            <person name="Sano S."/>
            <person name="Moriya S."/>
            <person name="Momiyama H."/>
            <person name="Satoh N."/>
            <person name="Takami S."/>
            <person name="Terashima Y."/>
            <person name="Suzuki O."/>
            <person name="Nakagawa S."/>
            <person name="Senoh A."/>
            <person name="Mizoguchi H."/>
            <person name="Goto Y."/>
            <person name="Shimizu F."/>
            <person name="Wakebe H."/>
            <person name="Hishigaki H."/>
            <person name="Watanabe T."/>
            <person name="Sugiyama A."/>
            <person name="Takemoto M."/>
            <person name="Kawakami B."/>
            <person name="Yamazaki M."/>
            <person name="Watanabe K."/>
            <person name="Kumagai A."/>
            <person name="Itakura S."/>
            <person name="Fukuzumi Y."/>
            <person name="Fujimori Y."/>
            <person name="Komiyama M."/>
            <person name="Tashiro H."/>
            <person name="Tanigami A."/>
            <person name="Fujiwara T."/>
            <person name="Ono T."/>
            <person name="Yamada K."/>
            <person name="Fujii Y."/>
            <person name="Ozaki K."/>
            <person name="Hirao M."/>
            <person name="Ohmori Y."/>
            <person name="Kawabata A."/>
            <person name="Hikiji T."/>
            <person name="Kobatake N."/>
            <person name="Inagaki H."/>
            <person name="Ikema Y."/>
            <person name="Okamoto S."/>
            <person name="Okitani R."/>
            <person name="Kawakami T."/>
            <person name="Noguchi S."/>
            <person name="Itoh T."/>
            <person name="Shigeta K."/>
            <person name="Senba T."/>
            <person name="Matsumura K."/>
            <person name="Nakajima Y."/>
            <person name="Mizuno T."/>
            <person name="Morinaga M."/>
            <person name="Sasaki M."/>
            <person name="Togashi T."/>
            <person name="Oyama M."/>
            <person name="Hata H."/>
            <person name="Watanabe M."/>
            <person name="Komatsu T."/>
            <person name="Mizushima-Sugano J."/>
            <person name="Satoh T."/>
            <person name="Shirai Y."/>
            <person name="Takahashi Y."/>
            <person name="Nakagawa K."/>
            <person name="Okumura K."/>
            <person name="Nagase T."/>
            <person name="Nomura N."/>
            <person name="Kikuchi H."/>
            <person name="Masuho Y."/>
            <person name="Yamashita R."/>
            <person name="Nakai K."/>
            <person name="Yada T."/>
            <person name="Nakamura Y."/>
            <person name="Ohara O."/>
            <person name="Isogai T."/>
            <person name="Sugano S."/>
        </authorList>
    </citation>
    <scope>NUCLEOTIDE SEQUENCE [LARGE SCALE MRNA] (ISOFORM 1)</scope>
    <source>
        <tissue>Brain</tissue>
    </source>
</reference>
<reference key="6">
    <citation type="journal article" date="2006" name="Nature">
        <title>The DNA sequence and biological annotation of human chromosome 1.</title>
        <authorList>
            <person name="Gregory S.G."/>
            <person name="Barlow K.F."/>
            <person name="McLay K.E."/>
            <person name="Kaul R."/>
            <person name="Swarbreck D."/>
            <person name="Dunham A."/>
            <person name="Scott C.E."/>
            <person name="Howe K.L."/>
            <person name="Woodfine K."/>
            <person name="Spencer C.C.A."/>
            <person name="Jones M.C."/>
            <person name="Gillson C."/>
            <person name="Searle S."/>
            <person name="Zhou Y."/>
            <person name="Kokocinski F."/>
            <person name="McDonald L."/>
            <person name="Evans R."/>
            <person name="Phillips K."/>
            <person name="Atkinson A."/>
            <person name="Cooper R."/>
            <person name="Jones C."/>
            <person name="Hall R.E."/>
            <person name="Andrews T.D."/>
            <person name="Lloyd C."/>
            <person name="Ainscough R."/>
            <person name="Almeida J.P."/>
            <person name="Ambrose K.D."/>
            <person name="Anderson F."/>
            <person name="Andrew R.W."/>
            <person name="Ashwell R.I.S."/>
            <person name="Aubin K."/>
            <person name="Babbage A.K."/>
            <person name="Bagguley C.L."/>
            <person name="Bailey J."/>
            <person name="Beasley H."/>
            <person name="Bethel G."/>
            <person name="Bird C.P."/>
            <person name="Bray-Allen S."/>
            <person name="Brown J.Y."/>
            <person name="Brown A.J."/>
            <person name="Buckley D."/>
            <person name="Burton J."/>
            <person name="Bye J."/>
            <person name="Carder C."/>
            <person name="Chapman J.C."/>
            <person name="Clark S.Y."/>
            <person name="Clarke G."/>
            <person name="Clee C."/>
            <person name="Cobley V."/>
            <person name="Collier R.E."/>
            <person name="Corby N."/>
            <person name="Coville G.J."/>
            <person name="Davies J."/>
            <person name="Deadman R."/>
            <person name="Dunn M."/>
            <person name="Earthrowl M."/>
            <person name="Ellington A.G."/>
            <person name="Errington H."/>
            <person name="Frankish A."/>
            <person name="Frankland J."/>
            <person name="French L."/>
            <person name="Garner P."/>
            <person name="Garnett J."/>
            <person name="Gay L."/>
            <person name="Ghori M.R.J."/>
            <person name="Gibson R."/>
            <person name="Gilby L.M."/>
            <person name="Gillett W."/>
            <person name="Glithero R.J."/>
            <person name="Grafham D.V."/>
            <person name="Griffiths C."/>
            <person name="Griffiths-Jones S."/>
            <person name="Grocock R."/>
            <person name="Hammond S."/>
            <person name="Harrison E.S.I."/>
            <person name="Hart E."/>
            <person name="Haugen E."/>
            <person name="Heath P.D."/>
            <person name="Holmes S."/>
            <person name="Holt K."/>
            <person name="Howden P.J."/>
            <person name="Hunt A.R."/>
            <person name="Hunt S.E."/>
            <person name="Hunter G."/>
            <person name="Isherwood J."/>
            <person name="James R."/>
            <person name="Johnson C."/>
            <person name="Johnson D."/>
            <person name="Joy A."/>
            <person name="Kay M."/>
            <person name="Kershaw J.K."/>
            <person name="Kibukawa M."/>
            <person name="Kimberley A.M."/>
            <person name="King A."/>
            <person name="Knights A.J."/>
            <person name="Lad H."/>
            <person name="Laird G."/>
            <person name="Lawlor S."/>
            <person name="Leongamornlert D.A."/>
            <person name="Lloyd D.M."/>
            <person name="Loveland J."/>
            <person name="Lovell J."/>
            <person name="Lush M.J."/>
            <person name="Lyne R."/>
            <person name="Martin S."/>
            <person name="Mashreghi-Mohammadi M."/>
            <person name="Matthews L."/>
            <person name="Matthews N.S.W."/>
            <person name="McLaren S."/>
            <person name="Milne S."/>
            <person name="Mistry S."/>
            <person name="Moore M.J.F."/>
            <person name="Nickerson T."/>
            <person name="O'Dell C.N."/>
            <person name="Oliver K."/>
            <person name="Palmeiri A."/>
            <person name="Palmer S.A."/>
            <person name="Parker A."/>
            <person name="Patel D."/>
            <person name="Pearce A.V."/>
            <person name="Peck A.I."/>
            <person name="Pelan S."/>
            <person name="Phelps K."/>
            <person name="Phillimore B.J."/>
            <person name="Plumb R."/>
            <person name="Rajan J."/>
            <person name="Raymond C."/>
            <person name="Rouse G."/>
            <person name="Saenphimmachak C."/>
            <person name="Sehra H.K."/>
            <person name="Sheridan E."/>
            <person name="Shownkeen R."/>
            <person name="Sims S."/>
            <person name="Skuce C.D."/>
            <person name="Smith M."/>
            <person name="Steward C."/>
            <person name="Subramanian S."/>
            <person name="Sycamore N."/>
            <person name="Tracey A."/>
            <person name="Tromans A."/>
            <person name="Van Helmond Z."/>
            <person name="Wall M."/>
            <person name="Wallis J.M."/>
            <person name="White S."/>
            <person name="Whitehead S.L."/>
            <person name="Wilkinson J.E."/>
            <person name="Willey D.L."/>
            <person name="Williams H."/>
            <person name="Wilming L."/>
            <person name="Wray P.W."/>
            <person name="Wu Z."/>
            <person name="Coulson A."/>
            <person name="Vaudin M."/>
            <person name="Sulston J.E."/>
            <person name="Durbin R.M."/>
            <person name="Hubbard T."/>
            <person name="Wooster R."/>
            <person name="Dunham I."/>
            <person name="Carter N.P."/>
            <person name="McVean G."/>
            <person name="Ross M.T."/>
            <person name="Harrow J."/>
            <person name="Olson M.V."/>
            <person name="Beck S."/>
            <person name="Rogers J."/>
            <person name="Bentley D.R."/>
        </authorList>
    </citation>
    <scope>NUCLEOTIDE SEQUENCE [LARGE SCALE GENOMIC DNA]</scope>
</reference>
<reference key="7">
    <citation type="submission" date="2005-09" db="EMBL/GenBank/DDBJ databases">
        <authorList>
            <person name="Mural R.J."/>
            <person name="Istrail S."/>
            <person name="Sutton G.G."/>
            <person name="Florea L."/>
            <person name="Halpern A.L."/>
            <person name="Mobarry C.M."/>
            <person name="Lippert R."/>
            <person name="Walenz B."/>
            <person name="Shatkay H."/>
            <person name="Dew I."/>
            <person name="Miller J.R."/>
            <person name="Flanigan M.J."/>
            <person name="Edwards N.J."/>
            <person name="Bolanos R."/>
            <person name="Fasulo D."/>
            <person name="Halldorsson B.V."/>
            <person name="Hannenhalli S."/>
            <person name="Turner R."/>
            <person name="Yooseph S."/>
            <person name="Lu F."/>
            <person name="Nusskern D.R."/>
            <person name="Shue B.C."/>
            <person name="Zheng X.H."/>
            <person name="Zhong F."/>
            <person name="Delcher A.L."/>
            <person name="Huson D.H."/>
            <person name="Kravitz S.A."/>
            <person name="Mouchard L."/>
            <person name="Reinert K."/>
            <person name="Remington K.A."/>
            <person name="Clark A.G."/>
            <person name="Waterman M.S."/>
            <person name="Eichler E.E."/>
            <person name="Adams M.D."/>
            <person name="Hunkapiller M.W."/>
            <person name="Myers E.W."/>
            <person name="Venter J.C."/>
        </authorList>
    </citation>
    <scope>NUCLEOTIDE SEQUENCE [LARGE SCALE GENOMIC DNA]</scope>
</reference>
<reference key="8">
    <citation type="journal article" date="2004" name="Genome Res.">
        <title>The status, quality, and expansion of the NIH full-length cDNA project: the Mammalian Gene Collection (MGC).</title>
        <authorList>
            <consortium name="The MGC Project Team"/>
        </authorList>
    </citation>
    <scope>NUCLEOTIDE SEQUENCE [LARGE SCALE MRNA] (ISOFORM 1)</scope>
    <source>
        <tissue>Brain</tissue>
    </source>
</reference>
<reference key="9">
    <citation type="journal article" date="2009" name="Science">
        <title>Lysine acetylation targets protein complexes and co-regulates major cellular functions.</title>
        <authorList>
            <person name="Choudhary C."/>
            <person name="Kumar C."/>
            <person name="Gnad F."/>
            <person name="Nielsen M.L."/>
            <person name="Rehman M."/>
            <person name="Walther T.C."/>
            <person name="Olsen J.V."/>
            <person name="Mann M."/>
        </authorList>
    </citation>
    <scope>ACETYLATION [LARGE SCALE ANALYSIS] AT LYS-263</scope>
    <scope>IDENTIFICATION BY MASS SPECTROMETRY [LARGE SCALE ANALYSIS]</scope>
</reference>
<reference key="10">
    <citation type="journal article" date="2011" name="BMC Syst. Biol.">
        <title>Initial characterization of the human central proteome.</title>
        <authorList>
            <person name="Burkard T.R."/>
            <person name="Planyavsky M."/>
            <person name="Kaupe I."/>
            <person name="Breitwieser F.P."/>
            <person name="Buerckstuemmer T."/>
            <person name="Bennett K.L."/>
            <person name="Superti-Furga G."/>
            <person name="Colinge J."/>
        </authorList>
    </citation>
    <scope>IDENTIFICATION BY MASS SPECTROMETRY [LARGE SCALE ANALYSIS]</scope>
</reference>
<feature type="chain" id="PRO_0000192573" description="Glutamate--cysteine ligase regulatory subunit">
    <location>
        <begin position="1"/>
        <end position="274"/>
    </location>
</feature>
<feature type="modified residue" description="N6-acetyllysine" evidence="4">
    <location>
        <position position="263"/>
    </location>
</feature>
<feature type="splice variant" id="VSP_057008" description="In isoform 2." evidence="2">
    <location>
        <begin position="43"/>
        <end position="64"/>
    </location>
</feature>
<feature type="sequence variant" id="VAR_021063" description="In dbSNP:rs17880087." evidence="1">
    <original>I</original>
    <variation>M</variation>
    <location>
        <position position="209"/>
    </location>
</feature>
<comment type="pathway">
    <text>Sulfur metabolism; glutathione biosynthesis; glutathione from L-cysteine and L-glutamate: step 1/2.</text>
</comment>
<comment type="subunit">
    <text>Heterodimer of a catalytic heavy chain and a regulatory light chain.</text>
</comment>
<comment type="interaction">
    <interactant intactId="EBI-1051387">
        <id>P48507</id>
    </interactant>
    <interactant intactId="EBI-2832840">
        <id>P48506</id>
        <label>GCLC</label>
    </interactant>
    <organismsDiffer>false</organismsDiffer>
    <experiments>4</experiments>
</comment>
<comment type="interaction">
    <interactant intactId="EBI-1051387">
        <id>P48507</id>
    </interactant>
    <interactant intactId="EBI-9057006">
        <id>Q9UJX0</id>
        <label>OSGIN1</label>
    </interactant>
    <organismsDiffer>false</organismsDiffer>
    <experiments>3</experiments>
</comment>
<comment type="alternative products">
    <event type="alternative splicing"/>
    <isoform>
        <id>P48507-1</id>
        <name>1</name>
        <sequence type="displayed"/>
    </isoform>
    <isoform>
        <id>P48507-2</id>
        <name>2</name>
        <sequence type="described" ref="VSP_057008"/>
    </isoform>
</comment>
<comment type="tissue specificity">
    <text>In all tissues examined. Highest levels in skeletal muscle.</text>
</comment>
<comment type="similarity">
    <text evidence="3">Belongs to the aldo/keto reductase family. Glutamate--cysteine ligase light chain subfamily.</text>
</comment>
<keyword id="KW-0007">Acetylation</keyword>
<keyword id="KW-0025">Alternative splicing</keyword>
<keyword id="KW-0317">Glutathione biosynthesis</keyword>
<keyword id="KW-1267">Proteomics identification</keyword>
<keyword id="KW-1185">Reference proteome</keyword>
<protein>
    <recommendedName>
        <fullName>Glutamate--cysteine ligase regulatory subunit</fullName>
    </recommendedName>
    <alternativeName>
        <fullName>GCS light chain</fullName>
    </alternativeName>
    <alternativeName>
        <fullName>Gamma-ECS regulatory subunit</fullName>
    </alternativeName>
    <alternativeName>
        <fullName>Gamma-glutamylcysteine synthetase regulatory subunit</fullName>
    </alternativeName>
    <alternativeName>
        <fullName>Glutamate--cysteine ligase modifier subunit</fullName>
    </alternativeName>
</protein>